<feature type="chain" id="PRO_1000046057" description="Ribosomal protein L11 methyltransferase">
    <location>
        <begin position="1"/>
        <end position="303"/>
    </location>
</feature>
<feature type="binding site" evidence="1">
    <location>
        <position position="144"/>
    </location>
    <ligand>
        <name>S-adenosyl-L-methionine</name>
        <dbReference type="ChEBI" id="CHEBI:59789"/>
    </ligand>
</feature>
<feature type="binding site" evidence="1">
    <location>
        <position position="165"/>
    </location>
    <ligand>
        <name>S-adenosyl-L-methionine</name>
        <dbReference type="ChEBI" id="CHEBI:59789"/>
    </ligand>
</feature>
<feature type="binding site" evidence="1">
    <location>
        <position position="187"/>
    </location>
    <ligand>
        <name>S-adenosyl-L-methionine</name>
        <dbReference type="ChEBI" id="CHEBI:59789"/>
    </ligand>
</feature>
<feature type="binding site" evidence="1">
    <location>
        <position position="235"/>
    </location>
    <ligand>
        <name>S-adenosyl-L-methionine</name>
        <dbReference type="ChEBI" id="CHEBI:59789"/>
    </ligand>
</feature>
<protein>
    <recommendedName>
        <fullName evidence="1">Ribosomal protein L11 methyltransferase</fullName>
        <shortName evidence="1">L11 Mtase</shortName>
        <ecNumber evidence="1">2.1.1.-</ecNumber>
    </recommendedName>
</protein>
<name>PRMA_PROM0</name>
<proteinExistence type="inferred from homology"/>
<sequence length="303" mass="34861">METKDWYKLTFLIESDSEEIIIWKLNELGIFSFSFEYLIKNENKKEVNIWLPIDDWDESSRSSFEKIIIKLLNINPPKNKFFEWSIIKQEDWLTSWKKYWAPELVGNHFLILPCWINLNKKFKDKQIIKIDPGAAFGTGSHPSTYLCLEKMENILFSDKKVLDIGSGSGILSVAARLLGAKEVCAVDNDYLAINSTKSNFQLNFGNLNKLNTYLGSFNEVILKNQLEQFDFVLCNILAEVIKGMIPNIYKCLRNNGEVIFSGILNSQKDEIIKILIQHDLKLLDVSTRKDWACISAQKASNST</sequence>
<comment type="function">
    <text evidence="1">Methylates ribosomal protein L11.</text>
</comment>
<comment type="catalytic activity">
    <reaction evidence="1">
        <text>L-lysyl-[protein] + 3 S-adenosyl-L-methionine = N(6),N(6),N(6)-trimethyl-L-lysyl-[protein] + 3 S-adenosyl-L-homocysteine + 3 H(+)</text>
        <dbReference type="Rhea" id="RHEA:54192"/>
        <dbReference type="Rhea" id="RHEA-COMP:9752"/>
        <dbReference type="Rhea" id="RHEA-COMP:13826"/>
        <dbReference type="ChEBI" id="CHEBI:15378"/>
        <dbReference type="ChEBI" id="CHEBI:29969"/>
        <dbReference type="ChEBI" id="CHEBI:57856"/>
        <dbReference type="ChEBI" id="CHEBI:59789"/>
        <dbReference type="ChEBI" id="CHEBI:61961"/>
    </reaction>
</comment>
<comment type="subcellular location">
    <subcellularLocation>
        <location evidence="1">Cytoplasm</location>
    </subcellularLocation>
</comment>
<comment type="similarity">
    <text evidence="1">Belongs to the methyltransferase superfamily. PrmA family.</text>
</comment>
<organism>
    <name type="scientific">Prochlorococcus marinus (strain MIT 9301)</name>
    <dbReference type="NCBI Taxonomy" id="167546"/>
    <lineage>
        <taxon>Bacteria</taxon>
        <taxon>Bacillati</taxon>
        <taxon>Cyanobacteriota</taxon>
        <taxon>Cyanophyceae</taxon>
        <taxon>Synechococcales</taxon>
        <taxon>Prochlorococcaceae</taxon>
        <taxon>Prochlorococcus</taxon>
    </lineage>
</organism>
<dbReference type="EC" id="2.1.1.-" evidence="1"/>
<dbReference type="EMBL" id="CP000576">
    <property type="protein sequence ID" value="ABO18162.1"/>
    <property type="molecule type" value="Genomic_DNA"/>
</dbReference>
<dbReference type="RefSeq" id="WP_011863465.1">
    <property type="nucleotide sequence ID" value="NC_009091.1"/>
</dbReference>
<dbReference type="SMR" id="A3PEI7"/>
<dbReference type="STRING" id="167546.P9301_15391"/>
<dbReference type="KEGG" id="pmg:P9301_15391"/>
<dbReference type="eggNOG" id="COG2264">
    <property type="taxonomic scope" value="Bacteria"/>
</dbReference>
<dbReference type="HOGENOM" id="CLU_049382_0_1_3"/>
<dbReference type="OrthoDB" id="9785995at2"/>
<dbReference type="Proteomes" id="UP000001430">
    <property type="component" value="Chromosome"/>
</dbReference>
<dbReference type="GO" id="GO:0005737">
    <property type="term" value="C:cytoplasm"/>
    <property type="evidence" value="ECO:0007669"/>
    <property type="project" value="UniProtKB-SubCell"/>
</dbReference>
<dbReference type="GO" id="GO:0016279">
    <property type="term" value="F:protein-lysine N-methyltransferase activity"/>
    <property type="evidence" value="ECO:0007669"/>
    <property type="project" value="RHEA"/>
</dbReference>
<dbReference type="GO" id="GO:0032259">
    <property type="term" value="P:methylation"/>
    <property type="evidence" value="ECO:0007669"/>
    <property type="project" value="UniProtKB-KW"/>
</dbReference>
<dbReference type="CDD" id="cd02440">
    <property type="entry name" value="AdoMet_MTases"/>
    <property type="match status" value="1"/>
</dbReference>
<dbReference type="Gene3D" id="3.40.50.150">
    <property type="entry name" value="Vaccinia Virus protein VP39"/>
    <property type="match status" value="1"/>
</dbReference>
<dbReference type="HAMAP" id="MF_00735">
    <property type="entry name" value="Methyltr_PrmA"/>
    <property type="match status" value="1"/>
</dbReference>
<dbReference type="InterPro" id="IPR050078">
    <property type="entry name" value="Ribosomal_L11_MeTrfase_PrmA"/>
</dbReference>
<dbReference type="InterPro" id="IPR004498">
    <property type="entry name" value="Ribosomal_PrmA_MeTrfase"/>
</dbReference>
<dbReference type="InterPro" id="IPR029063">
    <property type="entry name" value="SAM-dependent_MTases_sf"/>
</dbReference>
<dbReference type="NCBIfam" id="TIGR00406">
    <property type="entry name" value="prmA"/>
    <property type="match status" value="1"/>
</dbReference>
<dbReference type="PANTHER" id="PTHR43648">
    <property type="entry name" value="ELECTRON TRANSFER FLAVOPROTEIN BETA SUBUNIT LYSINE METHYLTRANSFERASE"/>
    <property type="match status" value="1"/>
</dbReference>
<dbReference type="PANTHER" id="PTHR43648:SF1">
    <property type="entry name" value="ELECTRON TRANSFER FLAVOPROTEIN BETA SUBUNIT LYSINE METHYLTRANSFERASE"/>
    <property type="match status" value="1"/>
</dbReference>
<dbReference type="Pfam" id="PF06325">
    <property type="entry name" value="PrmA"/>
    <property type="match status" value="1"/>
</dbReference>
<dbReference type="PIRSF" id="PIRSF000401">
    <property type="entry name" value="RPL11_MTase"/>
    <property type="match status" value="1"/>
</dbReference>
<dbReference type="SUPFAM" id="SSF53335">
    <property type="entry name" value="S-adenosyl-L-methionine-dependent methyltransferases"/>
    <property type="match status" value="1"/>
</dbReference>
<keyword id="KW-0963">Cytoplasm</keyword>
<keyword id="KW-0489">Methyltransferase</keyword>
<keyword id="KW-1185">Reference proteome</keyword>
<keyword id="KW-0949">S-adenosyl-L-methionine</keyword>
<keyword id="KW-0808">Transferase</keyword>
<gene>
    <name evidence="1" type="primary">prmA</name>
    <name type="ordered locus">P9301_15391</name>
</gene>
<reference key="1">
    <citation type="journal article" date="2007" name="PLoS Genet.">
        <title>Patterns and implications of gene gain and loss in the evolution of Prochlorococcus.</title>
        <authorList>
            <person name="Kettler G.C."/>
            <person name="Martiny A.C."/>
            <person name="Huang K."/>
            <person name="Zucker J."/>
            <person name="Coleman M.L."/>
            <person name="Rodrigue S."/>
            <person name="Chen F."/>
            <person name="Lapidus A."/>
            <person name="Ferriera S."/>
            <person name="Johnson J."/>
            <person name="Steglich C."/>
            <person name="Church G.M."/>
            <person name="Richardson P."/>
            <person name="Chisholm S.W."/>
        </authorList>
    </citation>
    <scope>NUCLEOTIDE SEQUENCE [LARGE SCALE GENOMIC DNA]</scope>
    <source>
        <strain>MIT 9301</strain>
    </source>
</reference>
<accession>A3PEI7</accession>
<evidence type="ECO:0000255" key="1">
    <source>
        <dbReference type="HAMAP-Rule" id="MF_00735"/>
    </source>
</evidence>